<reference key="1">
    <citation type="journal article" date="2005" name="PLoS Biol.">
        <title>The genomes of Oryza sativa: a history of duplications.</title>
        <authorList>
            <person name="Yu J."/>
            <person name="Wang J."/>
            <person name="Lin W."/>
            <person name="Li S."/>
            <person name="Li H."/>
            <person name="Zhou J."/>
            <person name="Ni P."/>
            <person name="Dong W."/>
            <person name="Hu S."/>
            <person name="Zeng C."/>
            <person name="Zhang J."/>
            <person name="Zhang Y."/>
            <person name="Li R."/>
            <person name="Xu Z."/>
            <person name="Li S."/>
            <person name="Li X."/>
            <person name="Zheng H."/>
            <person name="Cong L."/>
            <person name="Lin L."/>
            <person name="Yin J."/>
            <person name="Geng J."/>
            <person name="Li G."/>
            <person name="Shi J."/>
            <person name="Liu J."/>
            <person name="Lv H."/>
            <person name="Li J."/>
            <person name="Wang J."/>
            <person name="Deng Y."/>
            <person name="Ran L."/>
            <person name="Shi X."/>
            <person name="Wang X."/>
            <person name="Wu Q."/>
            <person name="Li C."/>
            <person name="Ren X."/>
            <person name="Wang J."/>
            <person name="Wang X."/>
            <person name="Li D."/>
            <person name="Liu D."/>
            <person name="Zhang X."/>
            <person name="Ji Z."/>
            <person name="Zhao W."/>
            <person name="Sun Y."/>
            <person name="Zhang Z."/>
            <person name="Bao J."/>
            <person name="Han Y."/>
            <person name="Dong L."/>
            <person name="Ji J."/>
            <person name="Chen P."/>
            <person name="Wu S."/>
            <person name="Liu J."/>
            <person name="Xiao Y."/>
            <person name="Bu D."/>
            <person name="Tan J."/>
            <person name="Yang L."/>
            <person name="Ye C."/>
            <person name="Zhang J."/>
            <person name="Xu J."/>
            <person name="Zhou Y."/>
            <person name="Yu Y."/>
            <person name="Zhang B."/>
            <person name="Zhuang S."/>
            <person name="Wei H."/>
            <person name="Liu B."/>
            <person name="Lei M."/>
            <person name="Yu H."/>
            <person name="Li Y."/>
            <person name="Xu H."/>
            <person name="Wei S."/>
            <person name="He X."/>
            <person name="Fang L."/>
            <person name="Zhang Z."/>
            <person name="Zhang Y."/>
            <person name="Huang X."/>
            <person name="Su Z."/>
            <person name="Tong W."/>
            <person name="Li J."/>
            <person name="Tong Z."/>
            <person name="Li S."/>
            <person name="Ye J."/>
            <person name="Wang L."/>
            <person name="Fang L."/>
            <person name="Lei T."/>
            <person name="Chen C.-S."/>
            <person name="Chen H.-C."/>
            <person name="Xu Z."/>
            <person name="Li H."/>
            <person name="Huang H."/>
            <person name="Zhang F."/>
            <person name="Xu H."/>
            <person name="Li N."/>
            <person name="Zhao C."/>
            <person name="Li S."/>
            <person name="Dong L."/>
            <person name="Huang Y."/>
            <person name="Li L."/>
            <person name="Xi Y."/>
            <person name="Qi Q."/>
            <person name="Li W."/>
            <person name="Zhang B."/>
            <person name="Hu W."/>
            <person name="Zhang Y."/>
            <person name="Tian X."/>
            <person name="Jiao Y."/>
            <person name="Liang X."/>
            <person name="Jin J."/>
            <person name="Gao L."/>
            <person name="Zheng W."/>
            <person name="Hao B."/>
            <person name="Liu S.-M."/>
            <person name="Wang W."/>
            <person name="Yuan L."/>
            <person name="Cao M."/>
            <person name="McDermott J."/>
            <person name="Samudrala R."/>
            <person name="Wang J."/>
            <person name="Wong G.K.-S."/>
            <person name="Yang H."/>
        </authorList>
    </citation>
    <scope>NUCLEOTIDE SEQUENCE [LARGE SCALE GENOMIC DNA]</scope>
    <source>
        <strain>cv. 93-11</strain>
    </source>
</reference>
<reference key="2">
    <citation type="journal article" date="2008" name="Plant Mol. Biol.">
        <title>A genome-wide survey of HD-Zip genes in rice and analysis of drought-responsive family members.</title>
        <authorList>
            <person name="Agalou A."/>
            <person name="Purwantomo S."/>
            <person name="Oevernaes E."/>
            <person name="Johannesson H."/>
            <person name="Zhu X."/>
            <person name="Estiati A."/>
            <person name="de Kam R.J."/>
            <person name="Engstroem P."/>
            <person name="Slamet-Loedin I.H."/>
            <person name="Zhu Z."/>
            <person name="Wang M."/>
            <person name="Xiong L."/>
            <person name="Meijer A.H."/>
            <person name="Ouwerkerk P.B.F."/>
        </authorList>
    </citation>
    <scope>NUCLEOTIDE SEQUENCE [MRNA] OF 48-197</scope>
    <scope>TISSUE SPECIFICITY</scope>
    <scope>GENE FAMILY</scope>
    <scope>NOMENCLATURE</scope>
    <source>
        <strain>cv. Minghui 86</strain>
    </source>
</reference>
<organism>
    <name type="scientific">Oryza sativa subsp. indica</name>
    <name type="common">Rice</name>
    <dbReference type="NCBI Taxonomy" id="39946"/>
    <lineage>
        <taxon>Eukaryota</taxon>
        <taxon>Viridiplantae</taxon>
        <taxon>Streptophyta</taxon>
        <taxon>Embryophyta</taxon>
        <taxon>Tracheophyta</taxon>
        <taxon>Spermatophyta</taxon>
        <taxon>Magnoliopsida</taxon>
        <taxon>Liliopsida</taxon>
        <taxon>Poales</taxon>
        <taxon>Poaceae</taxon>
        <taxon>BOP clade</taxon>
        <taxon>Oryzoideae</taxon>
        <taxon>Oryzeae</taxon>
        <taxon>Oryzinae</taxon>
        <taxon>Oryza</taxon>
        <taxon>Oryza sativa</taxon>
    </lineage>
</organism>
<evidence type="ECO:0000250" key="1"/>
<evidence type="ECO:0000255" key="2">
    <source>
        <dbReference type="PROSITE-ProRule" id="PRU00108"/>
    </source>
</evidence>
<evidence type="ECO:0000256" key="3">
    <source>
        <dbReference type="SAM" id="MobiDB-lite"/>
    </source>
</evidence>
<evidence type="ECO:0000269" key="4">
    <source>
    </source>
</evidence>
<evidence type="ECO:0000305" key="5"/>
<keyword id="KW-0238">DNA-binding</keyword>
<keyword id="KW-0371">Homeobox</keyword>
<keyword id="KW-0539">Nucleus</keyword>
<keyword id="KW-1185">Reference proteome</keyword>
<keyword id="KW-0804">Transcription</keyword>
<keyword id="KW-0805">Transcription regulation</keyword>
<comment type="function">
    <text evidence="1">Probable transcription factor.</text>
</comment>
<comment type="subcellular location">
    <subcellularLocation>
        <location evidence="5">Nucleus</location>
    </subcellularLocation>
</comment>
<comment type="tissue specificity">
    <text evidence="4">Expressed in roots, leaf sheaths and blades and panicles.</text>
</comment>
<comment type="similarity">
    <text evidence="5">Belongs to the HD-ZIP homeobox family. Class I subfamily.</text>
</comment>
<sequence>MEDLVDELYGVDEQGSSSAAARKRRLTAEQVRALERSFEEEKRKLEPERKSELARRLGIAPRQVAVWFQNRRARWKTKQLELDFDRLRAAHDELLAGRAALAADNESLRSQVILLTEKLQANGKSPSPSPAPAEQTAVPAAPESAKSFQLEEGRCLYDAAGSTTTTNGGGGGVAMPAARVAAARAASNDSPESYFAGARSPPSSSEDDCGGAGSDDDYPSSSVLLPVDATLVGDAFEHAVAATVAADEEAPLNSWEWFWN</sequence>
<protein>
    <recommendedName>
        <fullName>Homeobox-leucine zipper protein HOX25</fullName>
    </recommendedName>
    <alternativeName>
        <fullName>HD-ZIP protein HOX25</fullName>
    </alternativeName>
    <alternativeName>
        <fullName>Homeodomain transcription factor HOX25</fullName>
    </alternativeName>
    <alternativeName>
        <fullName>OsHox25</fullName>
    </alternativeName>
</protein>
<proteinExistence type="evidence at transcript level"/>
<name>HOX25_ORYSI</name>
<accession>A2Z0Q0</accession>
<accession>A5JPW2</accession>
<feature type="chain" id="PRO_0000331722" description="Homeobox-leucine zipper protein HOX25">
    <location>
        <begin position="1"/>
        <end position="260"/>
    </location>
</feature>
<feature type="DNA-binding region" description="Homeobox" evidence="2">
    <location>
        <begin position="19"/>
        <end position="79"/>
    </location>
</feature>
<feature type="region of interest" description="Disordered" evidence="3">
    <location>
        <begin position="1"/>
        <end position="24"/>
    </location>
</feature>
<feature type="region of interest" description="Leucine-zipper">
    <location>
        <begin position="78"/>
        <end position="122"/>
    </location>
</feature>
<feature type="region of interest" description="Disordered" evidence="3">
    <location>
        <begin position="121"/>
        <end position="145"/>
    </location>
</feature>
<feature type="region of interest" description="Disordered" evidence="3">
    <location>
        <begin position="190"/>
        <end position="221"/>
    </location>
</feature>
<feature type="compositionally biased region" description="Acidic residues" evidence="3">
    <location>
        <begin position="1"/>
        <end position="10"/>
    </location>
</feature>
<feature type="compositionally biased region" description="Acidic residues" evidence="3">
    <location>
        <begin position="205"/>
        <end position="218"/>
    </location>
</feature>
<gene>
    <name type="primary">HOX25</name>
    <name type="ORF">OsI_030143</name>
</gene>
<dbReference type="EMBL" id="CM000134">
    <property type="protein sequence ID" value="EAZ08911.1"/>
    <property type="molecule type" value="Genomic_DNA"/>
</dbReference>
<dbReference type="EMBL" id="EF555547">
    <property type="protein sequence ID" value="ABQ57288.1"/>
    <property type="molecule type" value="mRNA"/>
</dbReference>
<dbReference type="SMR" id="A2Z0Q0"/>
<dbReference type="EnsemblPlants" id="BGIOSGA029853-TA">
    <property type="protein sequence ID" value="BGIOSGA029853-PA"/>
    <property type="gene ID" value="BGIOSGA029853"/>
</dbReference>
<dbReference type="Gramene" id="BGIOSGA029853-TA">
    <property type="protein sequence ID" value="BGIOSGA029853-PA"/>
    <property type="gene ID" value="BGIOSGA029853"/>
</dbReference>
<dbReference type="HOGENOM" id="CLU_060842_2_0_1"/>
<dbReference type="OMA" id="PHYQLEE"/>
<dbReference type="Proteomes" id="UP000007015">
    <property type="component" value="Chromosome 9"/>
</dbReference>
<dbReference type="GO" id="GO:0005634">
    <property type="term" value="C:nucleus"/>
    <property type="evidence" value="ECO:0007669"/>
    <property type="project" value="UniProtKB-SubCell"/>
</dbReference>
<dbReference type="GO" id="GO:0000981">
    <property type="term" value="F:DNA-binding transcription factor activity, RNA polymerase II-specific"/>
    <property type="evidence" value="ECO:0007669"/>
    <property type="project" value="InterPro"/>
</dbReference>
<dbReference type="GO" id="GO:0043565">
    <property type="term" value="F:sequence-specific DNA binding"/>
    <property type="evidence" value="ECO:0007669"/>
    <property type="project" value="InterPro"/>
</dbReference>
<dbReference type="GO" id="GO:0045893">
    <property type="term" value="P:positive regulation of DNA-templated transcription"/>
    <property type="evidence" value="ECO:0007669"/>
    <property type="project" value="TreeGrafter"/>
</dbReference>
<dbReference type="CDD" id="cd00086">
    <property type="entry name" value="homeodomain"/>
    <property type="match status" value="1"/>
</dbReference>
<dbReference type="FunFam" id="1.10.10.60:FF:000410">
    <property type="entry name" value="Homeobox-leucine zipper protein HOX25-like"/>
    <property type="match status" value="1"/>
</dbReference>
<dbReference type="Gene3D" id="1.10.10.60">
    <property type="entry name" value="Homeodomain-like"/>
    <property type="match status" value="1"/>
</dbReference>
<dbReference type="InterPro" id="IPR001356">
    <property type="entry name" value="HD"/>
</dbReference>
<dbReference type="InterPro" id="IPR045224">
    <property type="entry name" value="HDZip_class_I_plant"/>
</dbReference>
<dbReference type="InterPro" id="IPR017970">
    <property type="entry name" value="Homeobox_CS"/>
</dbReference>
<dbReference type="InterPro" id="IPR009057">
    <property type="entry name" value="Homeodomain-like_sf"/>
</dbReference>
<dbReference type="InterPro" id="IPR000047">
    <property type="entry name" value="HTH_motif"/>
</dbReference>
<dbReference type="InterPro" id="IPR003106">
    <property type="entry name" value="Leu_zip_homeo"/>
</dbReference>
<dbReference type="PANTHER" id="PTHR24326">
    <property type="entry name" value="HOMEOBOX-LEUCINE ZIPPER PROTEIN"/>
    <property type="match status" value="1"/>
</dbReference>
<dbReference type="PANTHER" id="PTHR24326:SF525">
    <property type="entry name" value="HOMEOBOX-LEUCINE ZIPPER PROTEIN HOX25"/>
    <property type="match status" value="1"/>
</dbReference>
<dbReference type="Pfam" id="PF02183">
    <property type="entry name" value="HALZ"/>
    <property type="match status" value="1"/>
</dbReference>
<dbReference type="Pfam" id="PF00046">
    <property type="entry name" value="Homeodomain"/>
    <property type="match status" value="1"/>
</dbReference>
<dbReference type="PRINTS" id="PR00031">
    <property type="entry name" value="HTHREPRESSR"/>
</dbReference>
<dbReference type="SMART" id="SM00389">
    <property type="entry name" value="HOX"/>
    <property type="match status" value="1"/>
</dbReference>
<dbReference type="SUPFAM" id="SSF46689">
    <property type="entry name" value="Homeodomain-like"/>
    <property type="match status" value="1"/>
</dbReference>
<dbReference type="PROSITE" id="PS00027">
    <property type="entry name" value="HOMEOBOX_1"/>
    <property type="match status" value="1"/>
</dbReference>
<dbReference type="PROSITE" id="PS50071">
    <property type="entry name" value="HOMEOBOX_2"/>
    <property type="match status" value="1"/>
</dbReference>